<sequence length="318" mass="35867">MFMINVLTLIIPILLAVAFLTLVERKVLGYMQFRKGPNVVGPYGLLQPIADAIKLFIKEPLRPATSSISMFILAPILALTLALTMWIPLPMPYPLINMNLGVLFMLAMSSLAVYSILWSGWASNSKYALIGALRAVAQTISYEVTLAIILLSVLLMNGSFTLSTLIITQEQVWLIFPAWPLAMMWFISTLAETNRAPFDLTEGESELVSGFNVEYAAGPFALFFMAEYANIIMMNIFTTTLFLGAFHNPYMPELYTINFTIKSLLLSITFLWIRASYPRFRYDQLMHLLWKNFLPLTLALCMWHVSLPILLSSIPPQT</sequence>
<accession>O78747</accession>
<organism>
    <name type="scientific">Ovis aries</name>
    <name type="common">Sheep</name>
    <dbReference type="NCBI Taxonomy" id="9940"/>
    <lineage>
        <taxon>Eukaryota</taxon>
        <taxon>Metazoa</taxon>
        <taxon>Chordata</taxon>
        <taxon>Craniata</taxon>
        <taxon>Vertebrata</taxon>
        <taxon>Euteleostomi</taxon>
        <taxon>Mammalia</taxon>
        <taxon>Eutheria</taxon>
        <taxon>Laurasiatheria</taxon>
        <taxon>Artiodactyla</taxon>
        <taxon>Ruminantia</taxon>
        <taxon>Pecora</taxon>
        <taxon>Bovidae</taxon>
        <taxon>Caprinae</taxon>
        <taxon>Ovis</taxon>
    </lineage>
</organism>
<dbReference type="EC" id="7.1.1.2"/>
<dbReference type="EMBL" id="AF010406">
    <property type="protein sequence ID" value="AAD10096.1"/>
    <property type="molecule type" value="Genomic_DNA"/>
</dbReference>
<dbReference type="PIR" id="T11050">
    <property type="entry name" value="T11050"/>
</dbReference>
<dbReference type="RefSeq" id="NP_008406.1">
    <property type="nucleotide sequence ID" value="NC_001941.1"/>
</dbReference>
<dbReference type="PDB" id="5LNK">
    <property type="method" value="EM"/>
    <property type="resolution" value="3.90 A"/>
    <property type="chains" value="H=1-318"/>
</dbReference>
<dbReference type="PDB" id="6Q9B">
    <property type="method" value="EM"/>
    <property type="resolution" value="3.90 A"/>
    <property type="chains" value="D1=1-318"/>
</dbReference>
<dbReference type="PDB" id="6QA9">
    <property type="method" value="EM"/>
    <property type="resolution" value="4.10 A"/>
    <property type="chains" value="D1=1-318"/>
</dbReference>
<dbReference type="PDB" id="6QBX">
    <property type="method" value="EM"/>
    <property type="resolution" value="4.20 A"/>
    <property type="chains" value="D1=1-318"/>
</dbReference>
<dbReference type="PDB" id="6QC2">
    <property type="method" value="EM"/>
    <property type="resolution" value="4.20 A"/>
    <property type="chains" value="D1=1-318"/>
</dbReference>
<dbReference type="PDB" id="6QC3">
    <property type="method" value="EM"/>
    <property type="resolution" value="4.20 A"/>
    <property type="chains" value="D1=1-318"/>
</dbReference>
<dbReference type="PDB" id="6QC4">
    <property type="method" value="EM"/>
    <property type="resolution" value="4.60 A"/>
    <property type="chains" value="D1=1-318"/>
</dbReference>
<dbReference type="PDB" id="6QC5">
    <property type="method" value="EM"/>
    <property type="resolution" value="4.30 A"/>
    <property type="chains" value="D1=1-318"/>
</dbReference>
<dbReference type="PDB" id="6QC6">
    <property type="method" value="EM"/>
    <property type="resolution" value="4.10 A"/>
    <property type="chains" value="D1=1-318"/>
</dbReference>
<dbReference type="PDB" id="6QC7">
    <property type="method" value="EM"/>
    <property type="resolution" value="4.40 A"/>
    <property type="chains" value="D1=1-318"/>
</dbReference>
<dbReference type="PDB" id="6QC8">
    <property type="method" value="EM"/>
    <property type="resolution" value="4.20 A"/>
    <property type="chains" value="D1=1-318"/>
</dbReference>
<dbReference type="PDB" id="6QC9">
    <property type="method" value="EM"/>
    <property type="resolution" value="5.70 A"/>
    <property type="chains" value="D1=1-318"/>
</dbReference>
<dbReference type="PDB" id="6QCA">
    <property type="method" value="EM"/>
    <property type="resolution" value="6.20 A"/>
    <property type="chains" value="D1=1-318"/>
</dbReference>
<dbReference type="PDB" id="6QCF">
    <property type="method" value="EM"/>
    <property type="resolution" value="6.50 A"/>
    <property type="chains" value="D1=1-318"/>
</dbReference>
<dbReference type="PDB" id="6ZKA">
    <property type="method" value="EM"/>
    <property type="resolution" value="2.50 A"/>
    <property type="chains" value="H=1-318"/>
</dbReference>
<dbReference type="PDB" id="6ZKB">
    <property type="method" value="EM"/>
    <property type="resolution" value="2.90 A"/>
    <property type="chains" value="H=1-318"/>
</dbReference>
<dbReference type="PDB" id="6ZKC">
    <property type="method" value="EM"/>
    <property type="resolution" value="3.10 A"/>
    <property type="chains" value="H=1-318"/>
</dbReference>
<dbReference type="PDB" id="6ZKD">
    <property type="method" value="EM"/>
    <property type="resolution" value="2.70 A"/>
    <property type="chains" value="H=1-318"/>
</dbReference>
<dbReference type="PDB" id="6ZKE">
    <property type="method" value="EM"/>
    <property type="resolution" value="2.60 A"/>
    <property type="chains" value="H=1-318"/>
</dbReference>
<dbReference type="PDB" id="6ZKF">
    <property type="method" value="EM"/>
    <property type="resolution" value="2.80 A"/>
    <property type="chains" value="H=1-318"/>
</dbReference>
<dbReference type="PDB" id="6ZKG">
    <property type="method" value="EM"/>
    <property type="resolution" value="3.40 A"/>
    <property type="chains" value="H=1-318"/>
</dbReference>
<dbReference type="PDB" id="6ZKH">
    <property type="method" value="EM"/>
    <property type="resolution" value="3.00 A"/>
    <property type="chains" value="H=1-318"/>
</dbReference>
<dbReference type="PDB" id="6ZKI">
    <property type="method" value="EM"/>
    <property type="resolution" value="2.80 A"/>
    <property type="chains" value="H=1-318"/>
</dbReference>
<dbReference type="PDB" id="6ZKJ">
    <property type="method" value="EM"/>
    <property type="resolution" value="3.00 A"/>
    <property type="chains" value="H=1-318"/>
</dbReference>
<dbReference type="PDB" id="6ZKK">
    <property type="method" value="EM"/>
    <property type="resolution" value="3.70 A"/>
    <property type="chains" value="H=1-318"/>
</dbReference>
<dbReference type="PDB" id="6ZKL">
    <property type="method" value="EM"/>
    <property type="resolution" value="3.10 A"/>
    <property type="chains" value="H=1-318"/>
</dbReference>
<dbReference type="PDB" id="6ZKM">
    <property type="method" value="EM"/>
    <property type="resolution" value="2.80 A"/>
    <property type="chains" value="H=1-318"/>
</dbReference>
<dbReference type="PDB" id="6ZKN">
    <property type="method" value="EM"/>
    <property type="resolution" value="2.90 A"/>
    <property type="chains" value="H=1-318"/>
</dbReference>
<dbReference type="PDB" id="6ZKO">
    <property type="method" value="EM"/>
    <property type="resolution" value="3.80 A"/>
    <property type="chains" value="H=1-318"/>
</dbReference>
<dbReference type="PDB" id="6ZKP">
    <property type="method" value="EM"/>
    <property type="resolution" value="3.20 A"/>
    <property type="chains" value="H=1-318"/>
</dbReference>
<dbReference type="PDB" id="6ZKQ">
    <property type="method" value="EM"/>
    <property type="resolution" value="3.30 A"/>
    <property type="chains" value="H=1-318"/>
</dbReference>
<dbReference type="PDB" id="6ZKR">
    <property type="method" value="EM"/>
    <property type="resolution" value="3.50 A"/>
    <property type="chains" value="H=1-318"/>
</dbReference>
<dbReference type="PDB" id="6ZKS">
    <property type="method" value="EM"/>
    <property type="resolution" value="3.10 A"/>
    <property type="chains" value="H=1-318"/>
</dbReference>
<dbReference type="PDB" id="6ZKT">
    <property type="method" value="EM"/>
    <property type="resolution" value="2.80 A"/>
    <property type="chains" value="H=1-318"/>
</dbReference>
<dbReference type="PDB" id="6ZKU">
    <property type="method" value="EM"/>
    <property type="resolution" value="3.00 A"/>
    <property type="chains" value="H=1-318"/>
</dbReference>
<dbReference type="PDB" id="6ZKV">
    <property type="method" value="EM"/>
    <property type="resolution" value="2.90 A"/>
    <property type="chains" value="H=1-318"/>
</dbReference>
<dbReference type="PDB" id="7ZD6">
    <property type="method" value="EM"/>
    <property type="resolution" value="3.16 A"/>
    <property type="chains" value="H=1-318"/>
</dbReference>
<dbReference type="PDB" id="7ZDH">
    <property type="method" value="EM"/>
    <property type="resolution" value="3.46 A"/>
    <property type="chains" value="H=1-318"/>
</dbReference>
<dbReference type="PDB" id="7ZDJ">
    <property type="method" value="EM"/>
    <property type="resolution" value="3.25 A"/>
    <property type="chains" value="H=1-318"/>
</dbReference>
<dbReference type="PDB" id="7ZDM">
    <property type="method" value="EM"/>
    <property type="resolution" value="3.44 A"/>
    <property type="chains" value="H=1-318"/>
</dbReference>
<dbReference type="PDB" id="7ZDP">
    <property type="method" value="EM"/>
    <property type="resolution" value="3.88 A"/>
    <property type="chains" value="H=1-318"/>
</dbReference>
<dbReference type="PDB" id="7ZEB">
    <property type="method" value="EM"/>
    <property type="resolution" value="3.80 A"/>
    <property type="chains" value="H=1-318"/>
</dbReference>
<dbReference type="PDBsum" id="5LNK"/>
<dbReference type="PDBsum" id="6Q9B"/>
<dbReference type="PDBsum" id="6QA9"/>
<dbReference type="PDBsum" id="6QBX"/>
<dbReference type="PDBsum" id="6QC2"/>
<dbReference type="PDBsum" id="6QC3"/>
<dbReference type="PDBsum" id="6QC4"/>
<dbReference type="PDBsum" id="6QC5"/>
<dbReference type="PDBsum" id="6QC6"/>
<dbReference type="PDBsum" id="6QC7"/>
<dbReference type="PDBsum" id="6QC8"/>
<dbReference type="PDBsum" id="6QC9"/>
<dbReference type="PDBsum" id="6QCA"/>
<dbReference type="PDBsum" id="6QCF"/>
<dbReference type="PDBsum" id="6ZKA"/>
<dbReference type="PDBsum" id="6ZKB"/>
<dbReference type="PDBsum" id="6ZKC"/>
<dbReference type="PDBsum" id="6ZKD"/>
<dbReference type="PDBsum" id="6ZKE"/>
<dbReference type="PDBsum" id="6ZKF"/>
<dbReference type="PDBsum" id="6ZKG"/>
<dbReference type="PDBsum" id="6ZKH"/>
<dbReference type="PDBsum" id="6ZKI"/>
<dbReference type="PDBsum" id="6ZKJ"/>
<dbReference type="PDBsum" id="6ZKK"/>
<dbReference type="PDBsum" id="6ZKL"/>
<dbReference type="PDBsum" id="6ZKM"/>
<dbReference type="PDBsum" id="6ZKN"/>
<dbReference type="PDBsum" id="6ZKO"/>
<dbReference type="PDBsum" id="6ZKP"/>
<dbReference type="PDBsum" id="6ZKQ"/>
<dbReference type="PDBsum" id="6ZKR"/>
<dbReference type="PDBsum" id="6ZKS"/>
<dbReference type="PDBsum" id="6ZKT"/>
<dbReference type="PDBsum" id="6ZKU"/>
<dbReference type="PDBsum" id="6ZKV"/>
<dbReference type="PDBsum" id="7ZD6"/>
<dbReference type="PDBsum" id="7ZDH"/>
<dbReference type="PDBsum" id="7ZDJ"/>
<dbReference type="PDBsum" id="7ZDM"/>
<dbReference type="PDBsum" id="7ZDP"/>
<dbReference type="PDBsum" id="7ZEB"/>
<dbReference type="EMDB" id="EMD-11242"/>
<dbReference type="EMDB" id="EMD-11243"/>
<dbReference type="EMDB" id="EMD-11244"/>
<dbReference type="EMDB" id="EMD-11245"/>
<dbReference type="EMDB" id="EMD-11246"/>
<dbReference type="EMDB" id="EMD-11247"/>
<dbReference type="EMDB" id="EMD-11248"/>
<dbReference type="EMDB" id="EMD-11249"/>
<dbReference type="EMDB" id="EMD-11250"/>
<dbReference type="EMDB" id="EMD-11251"/>
<dbReference type="EMDB" id="EMD-11252"/>
<dbReference type="EMDB" id="EMD-11253"/>
<dbReference type="EMDB" id="EMD-11254"/>
<dbReference type="EMDB" id="EMD-11255"/>
<dbReference type="EMDB" id="EMD-11256"/>
<dbReference type="EMDB" id="EMD-11257"/>
<dbReference type="EMDB" id="EMD-11258"/>
<dbReference type="EMDB" id="EMD-11259"/>
<dbReference type="EMDB" id="EMD-11260"/>
<dbReference type="EMDB" id="EMD-11261"/>
<dbReference type="EMDB" id="EMD-11262"/>
<dbReference type="EMDB" id="EMD-11263"/>
<dbReference type="EMDB" id="EMD-14637"/>
<dbReference type="EMDB" id="EMD-14648"/>
<dbReference type="EMDB" id="EMD-14651"/>
<dbReference type="EMDB" id="EMD-14658"/>
<dbReference type="EMDB" id="EMD-14664"/>
<dbReference type="EMDB" id="EMD-14688"/>
<dbReference type="EMDB" id="EMD-4479"/>
<dbReference type="EMDB" id="EMD-4482"/>
<dbReference type="EMDB" id="EMD-4493"/>
<dbReference type="EMDB" id="EMD-4494"/>
<dbReference type="EMDB" id="EMD-4495"/>
<dbReference type="EMDB" id="EMD-4496"/>
<dbReference type="EMDB" id="EMD-4497"/>
<dbReference type="EMDB" id="EMD-4498"/>
<dbReference type="EMDB" id="EMD-4499"/>
<dbReference type="EMDB" id="EMD-4500"/>
<dbReference type="EMDB" id="EMD-4501"/>
<dbReference type="EMDB" id="EMD-4502"/>
<dbReference type="EMDB" id="EMD-4505"/>
<dbReference type="EMDB" id="EMD-8128"/>
<dbReference type="SMR" id="O78747"/>
<dbReference type="STRING" id="9940.ENSOARP00000000001"/>
<dbReference type="PaxDb" id="9940-ENSOARP00000000001"/>
<dbReference type="Ensembl" id="ENSOART00025000007">
    <property type="protein sequence ID" value="ENSOARP00025000002"/>
    <property type="gene ID" value="ENSOARG00025000007"/>
</dbReference>
<dbReference type="Ensembl" id="ENSOART00040000007">
    <property type="protein sequence ID" value="ENSOARP00040000002"/>
    <property type="gene ID" value="ENSOARG00040000007"/>
</dbReference>
<dbReference type="Ensembl" id="ENSOART00180000007">
    <property type="protein sequence ID" value="ENSOARP00180000002"/>
    <property type="gene ID" value="ENSOARG00180000007"/>
</dbReference>
<dbReference type="Ensembl" id="ENSOART00185000007">
    <property type="protein sequence ID" value="ENSOARP00185000002"/>
    <property type="gene ID" value="ENSOARG00185000007"/>
</dbReference>
<dbReference type="Ensembl" id="ENSOART00215000007">
    <property type="protein sequence ID" value="ENSOARP00215000002"/>
    <property type="gene ID" value="ENSOARG00215000007"/>
</dbReference>
<dbReference type="Ensembl" id="ENSOART00220000007">
    <property type="protein sequence ID" value="ENSOARP00220000002"/>
    <property type="gene ID" value="ENSOARG00220000007"/>
</dbReference>
<dbReference type="Ensembl" id="ENSOART00225000007">
    <property type="protein sequence ID" value="ENSOARP00225000002"/>
    <property type="gene ID" value="ENSOARG00225000007"/>
</dbReference>
<dbReference type="Ensembl" id="ENSOART00260000007">
    <property type="protein sequence ID" value="ENSOARP00260000002"/>
    <property type="gene ID" value="ENSOARG00260000007"/>
</dbReference>
<dbReference type="GeneID" id="808249"/>
<dbReference type="KEGG" id="oas:808249"/>
<dbReference type="CTD" id="4535"/>
<dbReference type="eggNOG" id="KOG4770">
    <property type="taxonomic scope" value="Eukaryota"/>
</dbReference>
<dbReference type="HOGENOM" id="CLU_015134_0_1_1"/>
<dbReference type="OMA" id="WSGWASN"/>
<dbReference type="OrthoDB" id="531329at2759"/>
<dbReference type="Proteomes" id="UP000002356">
    <property type="component" value="Mitochondrion"/>
</dbReference>
<dbReference type="Bgee" id="ENSOARG00000000006">
    <property type="expression patterns" value="Expressed in cerebellum and 55 other cell types or tissues"/>
</dbReference>
<dbReference type="ExpressionAtlas" id="O78747">
    <property type="expression patterns" value="baseline"/>
</dbReference>
<dbReference type="GO" id="GO:0005743">
    <property type="term" value="C:mitochondrial inner membrane"/>
    <property type="evidence" value="ECO:0007669"/>
    <property type="project" value="UniProtKB-SubCell"/>
</dbReference>
<dbReference type="GO" id="GO:0045271">
    <property type="term" value="C:respiratory chain complex I"/>
    <property type="evidence" value="ECO:0007669"/>
    <property type="project" value="Ensembl"/>
</dbReference>
<dbReference type="GO" id="GO:0008137">
    <property type="term" value="F:NADH dehydrogenase (ubiquinone) activity"/>
    <property type="evidence" value="ECO:0007669"/>
    <property type="project" value="UniProtKB-EC"/>
</dbReference>
<dbReference type="GO" id="GO:0006120">
    <property type="term" value="P:mitochondrial electron transport, NADH to ubiquinone"/>
    <property type="evidence" value="ECO:0007669"/>
    <property type="project" value="Ensembl"/>
</dbReference>
<dbReference type="GO" id="GO:0032981">
    <property type="term" value="P:mitochondrial respiratory chain complex I assembly"/>
    <property type="evidence" value="ECO:0007669"/>
    <property type="project" value="Ensembl"/>
</dbReference>
<dbReference type="HAMAP" id="MF_01350">
    <property type="entry name" value="NDH1_NuoH"/>
    <property type="match status" value="1"/>
</dbReference>
<dbReference type="InterPro" id="IPR001694">
    <property type="entry name" value="NADH_UbQ_OxRdtase_su1/FPO"/>
</dbReference>
<dbReference type="InterPro" id="IPR018086">
    <property type="entry name" value="NADH_UbQ_OxRdtase_su1_CS"/>
</dbReference>
<dbReference type="PANTHER" id="PTHR11432">
    <property type="entry name" value="NADH DEHYDROGENASE SUBUNIT 1"/>
    <property type="match status" value="1"/>
</dbReference>
<dbReference type="PANTHER" id="PTHR11432:SF3">
    <property type="entry name" value="NADH-UBIQUINONE OXIDOREDUCTASE CHAIN 1"/>
    <property type="match status" value="1"/>
</dbReference>
<dbReference type="Pfam" id="PF00146">
    <property type="entry name" value="NADHdh"/>
    <property type="match status" value="1"/>
</dbReference>
<dbReference type="PROSITE" id="PS00667">
    <property type="entry name" value="COMPLEX1_ND1_1"/>
    <property type="match status" value="1"/>
</dbReference>
<dbReference type="PROSITE" id="PS00668">
    <property type="entry name" value="COMPLEX1_ND1_2"/>
    <property type="match status" value="1"/>
</dbReference>
<reference key="1">
    <citation type="journal article" date="1998" name="J. Mol. Evol.">
        <title>The complete mitochondrial DNA sequence of the domestic sheep (Ovis aries) and comparison with the other major ovine haplotype.</title>
        <authorList>
            <person name="Hiendleder S."/>
            <person name="Lewalski H."/>
            <person name="Wassmuth R."/>
            <person name="Janke A."/>
        </authorList>
    </citation>
    <scope>NUCLEOTIDE SEQUENCE [LARGE SCALE GENOMIC DNA]</scope>
    <source>
        <strain evidence="4">Merinolandschaf</strain>
        <tissue>Liver</tissue>
    </source>
</reference>
<name>NU1M_SHEEP</name>
<protein>
    <recommendedName>
        <fullName>NADH-ubiquinone oxidoreductase chain 1</fullName>
        <ecNumber>7.1.1.2</ecNumber>
    </recommendedName>
    <alternativeName>
        <fullName>NADH dehydrogenase subunit 1</fullName>
    </alternativeName>
</protein>
<evidence type="ECO:0000250" key="1"/>
<evidence type="ECO:0000255" key="2"/>
<evidence type="ECO:0000305" key="3"/>
<evidence type="ECO:0000312" key="4">
    <source>
        <dbReference type="Proteomes" id="UP000002356"/>
    </source>
</evidence>
<evidence type="ECO:0007829" key="5">
    <source>
        <dbReference type="PDB" id="6ZKA"/>
    </source>
</evidence>
<evidence type="ECO:0007829" key="6">
    <source>
        <dbReference type="PDB" id="6ZKB"/>
    </source>
</evidence>
<evidence type="ECO:0007829" key="7">
    <source>
        <dbReference type="PDB" id="6ZKI"/>
    </source>
</evidence>
<evidence type="ECO:0007829" key="8">
    <source>
        <dbReference type="PDB" id="6ZKV"/>
    </source>
</evidence>
<evidence type="ECO:0007829" key="9">
    <source>
        <dbReference type="PDB" id="7ZD6"/>
    </source>
</evidence>
<proteinExistence type="evidence at protein level"/>
<geneLocation type="mitochondrion"/>
<gene>
    <name type="primary">MT-ND1</name>
    <name type="synonym">MTND1</name>
    <name type="synonym">NADH1</name>
    <name type="synonym">ND1</name>
</gene>
<feature type="chain" id="PRO_0000117476" description="NADH-ubiquinone oxidoreductase chain 1">
    <location>
        <begin position="1"/>
        <end position="318"/>
    </location>
</feature>
<feature type="transmembrane region" description="Helical" evidence="2">
    <location>
        <begin position="2"/>
        <end position="22"/>
    </location>
</feature>
<feature type="transmembrane region" description="Helical" evidence="2">
    <location>
        <begin position="68"/>
        <end position="88"/>
    </location>
</feature>
<feature type="transmembrane region" description="Helical" evidence="2">
    <location>
        <begin position="100"/>
        <end position="120"/>
    </location>
</feature>
<feature type="transmembrane region" description="Helical" evidence="2">
    <location>
        <begin position="147"/>
        <end position="167"/>
    </location>
</feature>
<feature type="transmembrane region" description="Helical" evidence="2">
    <location>
        <begin position="172"/>
        <end position="192"/>
    </location>
</feature>
<feature type="transmembrane region" description="Helical" evidence="2">
    <location>
        <begin position="217"/>
        <end position="237"/>
    </location>
</feature>
<feature type="transmembrane region" description="Helical" evidence="2">
    <location>
        <begin position="253"/>
        <end position="273"/>
    </location>
</feature>
<feature type="transmembrane region" description="Helical" evidence="2">
    <location>
        <begin position="294"/>
        <end position="314"/>
    </location>
</feature>
<feature type="helix" evidence="5">
    <location>
        <begin position="2"/>
        <end position="30"/>
    </location>
</feature>
<feature type="turn" evidence="5">
    <location>
        <begin position="31"/>
        <end position="33"/>
    </location>
</feature>
<feature type="strand" evidence="5">
    <location>
        <begin position="39"/>
        <end position="41"/>
    </location>
</feature>
<feature type="helix" evidence="5">
    <location>
        <begin position="42"/>
        <end position="44"/>
    </location>
</feature>
<feature type="helix" evidence="5">
    <location>
        <begin position="47"/>
        <end position="56"/>
    </location>
</feature>
<feature type="strand" evidence="6">
    <location>
        <begin position="64"/>
        <end position="66"/>
    </location>
</feature>
<feature type="helix" evidence="5">
    <location>
        <begin position="68"/>
        <end position="84"/>
    </location>
</feature>
<feature type="strand" evidence="8">
    <location>
        <begin position="86"/>
        <end position="88"/>
    </location>
</feature>
<feature type="strand" evidence="5">
    <location>
        <begin position="91"/>
        <end position="93"/>
    </location>
</feature>
<feature type="helix" evidence="5">
    <location>
        <begin position="101"/>
        <end position="110"/>
    </location>
</feature>
<feature type="helix" evidence="5">
    <location>
        <begin position="113"/>
        <end position="122"/>
    </location>
</feature>
<feature type="helix" evidence="5">
    <location>
        <begin position="126"/>
        <end position="154"/>
    </location>
</feature>
<feature type="turn" evidence="5">
    <location>
        <begin position="155"/>
        <end position="157"/>
    </location>
</feature>
<feature type="strand" evidence="5">
    <location>
        <begin position="158"/>
        <end position="160"/>
    </location>
</feature>
<feature type="helix" evidence="5">
    <location>
        <begin position="164"/>
        <end position="168"/>
    </location>
</feature>
<feature type="strand" evidence="5">
    <location>
        <begin position="170"/>
        <end position="172"/>
    </location>
</feature>
<feature type="turn" evidence="5">
    <location>
        <begin position="174"/>
        <end position="178"/>
    </location>
</feature>
<feature type="helix" evidence="5">
    <location>
        <begin position="179"/>
        <end position="192"/>
    </location>
</feature>
<feature type="strand" evidence="7">
    <location>
        <begin position="201"/>
        <end position="205"/>
    </location>
</feature>
<feature type="strand" evidence="6">
    <location>
        <begin position="207"/>
        <end position="209"/>
    </location>
</feature>
<feature type="strand" evidence="7">
    <location>
        <begin position="210"/>
        <end position="212"/>
    </location>
</feature>
<feature type="strand" evidence="9">
    <location>
        <begin position="213"/>
        <end position="215"/>
    </location>
</feature>
<feature type="helix" evidence="5">
    <location>
        <begin position="217"/>
        <end position="242"/>
    </location>
</feature>
<feature type="helix" evidence="5">
    <location>
        <begin position="253"/>
        <end position="274"/>
    </location>
</feature>
<feature type="helix" evidence="5">
    <location>
        <begin position="282"/>
        <end position="290"/>
    </location>
</feature>
<feature type="helix" evidence="5">
    <location>
        <begin position="293"/>
        <end position="310"/>
    </location>
</feature>
<keyword id="KW-0002">3D-structure</keyword>
<keyword id="KW-0249">Electron transport</keyword>
<keyword id="KW-0472">Membrane</keyword>
<keyword id="KW-0496">Mitochondrion</keyword>
<keyword id="KW-0999">Mitochondrion inner membrane</keyword>
<keyword id="KW-0520">NAD</keyword>
<keyword id="KW-1185">Reference proteome</keyword>
<keyword id="KW-0679">Respiratory chain</keyword>
<keyword id="KW-1278">Translocase</keyword>
<keyword id="KW-0812">Transmembrane</keyword>
<keyword id="KW-1133">Transmembrane helix</keyword>
<keyword id="KW-0813">Transport</keyword>
<keyword id="KW-0830">Ubiquinone</keyword>
<comment type="function">
    <text evidence="1">Core subunit of the mitochondrial membrane respiratory chain NADH dehydrogenase (Complex I) that is believed to belong to the minimal assembly required for catalysis. Complex I functions in the transfer of electrons from NADH to the respiratory chain. The immediate electron acceptor for the enzyme is believed to be ubiquinone (By similarity).</text>
</comment>
<comment type="catalytic activity">
    <reaction>
        <text>a ubiquinone + NADH + 5 H(+)(in) = a ubiquinol + NAD(+) + 4 H(+)(out)</text>
        <dbReference type="Rhea" id="RHEA:29091"/>
        <dbReference type="Rhea" id="RHEA-COMP:9565"/>
        <dbReference type="Rhea" id="RHEA-COMP:9566"/>
        <dbReference type="ChEBI" id="CHEBI:15378"/>
        <dbReference type="ChEBI" id="CHEBI:16389"/>
        <dbReference type="ChEBI" id="CHEBI:17976"/>
        <dbReference type="ChEBI" id="CHEBI:57540"/>
        <dbReference type="ChEBI" id="CHEBI:57945"/>
        <dbReference type="EC" id="7.1.1.2"/>
    </reaction>
</comment>
<comment type="subcellular location">
    <subcellularLocation>
        <location evidence="1">Mitochondrion inner membrane</location>
        <topology evidence="1">Multi-pass membrane protein</topology>
    </subcellularLocation>
</comment>
<comment type="similarity">
    <text evidence="3">Belongs to the complex I subunit 1 family.</text>
</comment>